<organism>
    <name type="scientific">Procambarus clarkii</name>
    <name type="common">Red swamp crayfish</name>
    <dbReference type="NCBI Taxonomy" id="6728"/>
    <lineage>
        <taxon>Eukaryota</taxon>
        <taxon>Metazoa</taxon>
        <taxon>Ecdysozoa</taxon>
        <taxon>Arthropoda</taxon>
        <taxon>Crustacea</taxon>
        <taxon>Multicrustacea</taxon>
        <taxon>Malacostraca</taxon>
        <taxon>Eumalacostraca</taxon>
        <taxon>Eucarida</taxon>
        <taxon>Decapoda</taxon>
        <taxon>Pleocyemata</taxon>
        <taxon>Astacidea</taxon>
        <taxon>Astacoidea</taxon>
        <taxon>Cambaridae</taxon>
        <taxon>Procambarus</taxon>
    </lineage>
</organism>
<sequence length="18" mass="1942">NSELINSILGLPKVMNEA</sequence>
<reference key="1">
    <citation type="journal article" date="1991" name="Pigment Cell Res.">
        <title>Primary structure and relative potency of an analog of beta-PDH (pigment-dispersing hormone) from the crayfish Procambarus clarkii.</title>
        <authorList>
            <person name="McCallum M.L."/>
            <person name="Rao K.R."/>
            <person name="Riehm J.P."/>
            <person name="Mohrherr C.J."/>
            <person name="Morgan W.T."/>
        </authorList>
    </citation>
    <scope>PROTEIN SEQUENCE</scope>
    <scope>SYNTHESIS</scope>
    <scope>AMIDATION AT ALA-18</scope>
    <source>
        <tissue>Eyestalk</tissue>
    </source>
</reference>
<proteinExistence type="evidence at protein level"/>
<feature type="peptide" id="PRO_0000044235" description="Pigment-dispersing hormone">
    <location>
        <begin position="1"/>
        <end position="18"/>
    </location>
</feature>
<feature type="modified residue" description="Alanine amide" evidence="1">
    <location>
        <position position="18"/>
    </location>
</feature>
<accession>Q9TWW7</accession>
<comment type="function">
    <text>Causes the migration of the distal retinal pigment into the proximal end of the pigment chromatophore cells and thus decreases the amount of light entering the retinulas. May also function as a neurotransmitter and/or neuromodulator.</text>
</comment>
<comment type="subcellular location">
    <subcellularLocation>
        <location>Secreted</location>
    </subcellularLocation>
</comment>
<comment type="similarity">
    <text evidence="2">Belongs to the arthropod PDH family.</text>
</comment>
<dbReference type="PIR" id="A45590">
    <property type="entry name" value="A45590"/>
</dbReference>
<dbReference type="GO" id="GO:0005576">
    <property type="term" value="C:extracellular region"/>
    <property type="evidence" value="ECO:0007669"/>
    <property type="project" value="UniProtKB-SubCell"/>
</dbReference>
<dbReference type="GO" id="GO:0045202">
    <property type="term" value="C:synapse"/>
    <property type="evidence" value="ECO:0007669"/>
    <property type="project" value="GOC"/>
</dbReference>
<dbReference type="GO" id="GO:0005179">
    <property type="term" value="F:hormone activity"/>
    <property type="evidence" value="ECO:0007669"/>
    <property type="project" value="UniProtKB-KW"/>
</dbReference>
<dbReference type="GO" id="GO:0007268">
    <property type="term" value="P:chemical synaptic transmission"/>
    <property type="evidence" value="ECO:0007669"/>
    <property type="project" value="UniProtKB-KW"/>
</dbReference>
<dbReference type="GO" id="GO:0009416">
    <property type="term" value="P:response to light stimulus"/>
    <property type="evidence" value="ECO:0007669"/>
    <property type="project" value="InterPro"/>
</dbReference>
<dbReference type="InterPro" id="IPR009396">
    <property type="entry name" value="Pigment_DH"/>
</dbReference>
<dbReference type="Pfam" id="PF06324">
    <property type="entry name" value="Pigment_DH"/>
    <property type="match status" value="1"/>
</dbReference>
<keyword id="KW-0027">Amidation</keyword>
<keyword id="KW-0903">Direct protein sequencing</keyword>
<keyword id="KW-0372">Hormone</keyword>
<keyword id="KW-0529">Neurotransmitter</keyword>
<keyword id="KW-0964">Secreted</keyword>
<protein>
    <recommendedName>
        <fullName>Pigment-dispersing hormone</fullName>
        <shortName>PDH</shortName>
    </recommendedName>
</protein>
<name>PDH_PROCL</name>
<evidence type="ECO:0000269" key="1">
    <source>
    </source>
</evidence>
<evidence type="ECO:0000305" key="2"/>